<comment type="induction">
    <text evidence="1">Differentially expressed during meiosis.</text>
</comment>
<accession>G2TRJ4</accession>
<feature type="chain" id="PRO_0000416513" description="Uncharacterized protein tam1">
    <location>
        <begin position="1"/>
        <end position="117"/>
    </location>
</feature>
<feature type="helix" evidence="2">
    <location>
        <begin position="2"/>
        <end position="9"/>
    </location>
</feature>
<feature type="strand" evidence="2">
    <location>
        <begin position="10"/>
        <end position="14"/>
    </location>
</feature>
<feature type="strand" evidence="2">
    <location>
        <begin position="17"/>
        <end position="19"/>
    </location>
</feature>
<feature type="helix" evidence="2">
    <location>
        <begin position="39"/>
        <end position="53"/>
    </location>
</feature>
<feature type="helix" evidence="2">
    <location>
        <begin position="54"/>
        <end position="56"/>
    </location>
</feature>
<feature type="strand" evidence="2">
    <location>
        <begin position="61"/>
        <end position="67"/>
    </location>
</feature>
<feature type="turn" evidence="2">
    <location>
        <begin position="70"/>
        <end position="72"/>
    </location>
</feature>
<feature type="strand" evidence="2">
    <location>
        <begin position="75"/>
        <end position="77"/>
    </location>
</feature>
<feature type="strand" evidence="2">
    <location>
        <begin position="92"/>
        <end position="94"/>
    </location>
</feature>
<feature type="helix" evidence="2">
    <location>
        <begin position="97"/>
        <end position="100"/>
    </location>
</feature>
<feature type="turn" evidence="2">
    <location>
        <begin position="101"/>
        <end position="103"/>
    </location>
</feature>
<feature type="helix" evidence="2">
    <location>
        <begin position="104"/>
        <end position="116"/>
    </location>
</feature>
<evidence type="ECO:0000269" key="1">
    <source>
    </source>
</evidence>
<evidence type="ECO:0007829" key="2">
    <source>
        <dbReference type="PDB" id="8FW5"/>
    </source>
</evidence>
<organism>
    <name type="scientific">Schizosaccharomyces pombe (strain 972 / ATCC 24843)</name>
    <name type="common">Fission yeast</name>
    <dbReference type="NCBI Taxonomy" id="284812"/>
    <lineage>
        <taxon>Eukaryota</taxon>
        <taxon>Fungi</taxon>
        <taxon>Dikarya</taxon>
        <taxon>Ascomycota</taxon>
        <taxon>Taphrinomycotina</taxon>
        <taxon>Schizosaccharomycetes</taxon>
        <taxon>Schizosaccharomycetales</taxon>
        <taxon>Schizosaccharomycetaceae</taxon>
        <taxon>Schizosaccharomyces</taxon>
    </lineage>
</organism>
<proteinExistence type="evidence at protein level"/>
<reference key="1">
    <citation type="journal article" date="2002" name="Nature">
        <title>The genome sequence of Schizosaccharomyces pombe.</title>
        <authorList>
            <person name="Wood V."/>
            <person name="Gwilliam R."/>
            <person name="Rajandream M.A."/>
            <person name="Lyne M.H."/>
            <person name="Lyne R."/>
            <person name="Stewart A."/>
            <person name="Sgouros J.G."/>
            <person name="Peat N."/>
            <person name="Hayles J."/>
            <person name="Baker S.G."/>
            <person name="Basham D."/>
            <person name="Bowman S."/>
            <person name="Brooks K."/>
            <person name="Brown D."/>
            <person name="Brown S."/>
            <person name="Chillingworth T."/>
            <person name="Churcher C.M."/>
            <person name="Collins M."/>
            <person name="Connor R."/>
            <person name="Cronin A."/>
            <person name="Davis P."/>
            <person name="Feltwell T."/>
            <person name="Fraser A."/>
            <person name="Gentles S."/>
            <person name="Goble A."/>
            <person name="Hamlin N."/>
            <person name="Harris D.E."/>
            <person name="Hidalgo J."/>
            <person name="Hodgson G."/>
            <person name="Holroyd S."/>
            <person name="Hornsby T."/>
            <person name="Howarth S."/>
            <person name="Huckle E.J."/>
            <person name="Hunt S."/>
            <person name="Jagels K."/>
            <person name="James K.D."/>
            <person name="Jones L."/>
            <person name="Jones M."/>
            <person name="Leather S."/>
            <person name="McDonald S."/>
            <person name="McLean J."/>
            <person name="Mooney P."/>
            <person name="Moule S."/>
            <person name="Mungall K.L."/>
            <person name="Murphy L.D."/>
            <person name="Niblett D."/>
            <person name="Odell C."/>
            <person name="Oliver K."/>
            <person name="O'Neil S."/>
            <person name="Pearson D."/>
            <person name="Quail M.A."/>
            <person name="Rabbinowitsch E."/>
            <person name="Rutherford K.M."/>
            <person name="Rutter S."/>
            <person name="Saunders D."/>
            <person name="Seeger K."/>
            <person name="Sharp S."/>
            <person name="Skelton J."/>
            <person name="Simmonds M.N."/>
            <person name="Squares R."/>
            <person name="Squares S."/>
            <person name="Stevens K."/>
            <person name="Taylor K."/>
            <person name="Taylor R.G."/>
            <person name="Tivey A."/>
            <person name="Walsh S.V."/>
            <person name="Warren T."/>
            <person name="Whitehead S."/>
            <person name="Woodward J.R."/>
            <person name="Volckaert G."/>
            <person name="Aert R."/>
            <person name="Robben J."/>
            <person name="Grymonprez B."/>
            <person name="Weltjens I."/>
            <person name="Vanstreels E."/>
            <person name="Rieger M."/>
            <person name="Schaefer M."/>
            <person name="Mueller-Auer S."/>
            <person name="Gabel C."/>
            <person name="Fuchs M."/>
            <person name="Duesterhoeft A."/>
            <person name="Fritzc C."/>
            <person name="Holzer E."/>
            <person name="Moestl D."/>
            <person name="Hilbert H."/>
            <person name="Borzym K."/>
            <person name="Langer I."/>
            <person name="Beck A."/>
            <person name="Lehrach H."/>
            <person name="Reinhardt R."/>
            <person name="Pohl T.M."/>
            <person name="Eger P."/>
            <person name="Zimmermann W."/>
            <person name="Wedler H."/>
            <person name="Wambutt R."/>
            <person name="Purnelle B."/>
            <person name="Goffeau A."/>
            <person name="Cadieu E."/>
            <person name="Dreano S."/>
            <person name="Gloux S."/>
            <person name="Lelaure V."/>
            <person name="Mottier S."/>
            <person name="Galibert F."/>
            <person name="Aves S.J."/>
            <person name="Xiang Z."/>
            <person name="Hunt C."/>
            <person name="Moore K."/>
            <person name="Hurst S.M."/>
            <person name="Lucas M."/>
            <person name="Rochet M."/>
            <person name="Gaillardin C."/>
            <person name="Tallada V.A."/>
            <person name="Garzon A."/>
            <person name="Thode G."/>
            <person name="Daga R.R."/>
            <person name="Cruzado L."/>
            <person name="Jimenez J."/>
            <person name="Sanchez M."/>
            <person name="del Rey F."/>
            <person name="Benito J."/>
            <person name="Dominguez A."/>
            <person name="Revuelta J.L."/>
            <person name="Moreno S."/>
            <person name="Armstrong J."/>
            <person name="Forsburg S.L."/>
            <person name="Cerutti L."/>
            <person name="Lowe T."/>
            <person name="McCombie W.R."/>
            <person name="Paulsen I."/>
            <person name="Potashkin J."/>
            <person name="Shpakovski G.V."/>
            <person name="Ussery D."/>
            <person name="Barrell B.G."/>
            <person name="Nurse P."/>
        </authorList>
    </citation>
    <scope>NUCLEOTIDE SEQUENCE [LARGE SCALE GENOMIC DNA]</scope>
    <source>
        <strain>972 / ATCC 24843</strain>
    </source>
</reference>
<reference key="2">
    <citation type="journal article" date="2011" name="Science">
        <title>Comparative functional genomics of the fission yeasts.</title>
        <authorList>
            <person name="Rhind N."/>
            <person name="Chen Z."/>
            <person name="Yassour M."/>
            <person name="Thompson D.A."/>
            <person name="Haas B.J."/>
            <person name="Habib N."/>
            <person name="Wapinski I."/>
            <person name="Roy S."/>
            <person name="Lin M.F."/>
            <person name="Heiman D.I."/>
            <person name="Young S.K."/>
            <person name="Furuya K."/>
            <person name="Guo Y."/>
            <person name="Pidoux A."/>
            <person name="Chen H.M."/>
            <person name="Robbertse B."/>
            <person name="Goldberg J.M."/>
            <person name="Aoki K."/>
            <person name="Bayne E.H."/>
            <person name="Berlin A.M."/>
            <person name="Desjardins C.A."/>
            <person name="Dobbs E."/>
            <person name="Dukaj L."/>
            <person name="Fan L."/>
            <person name="FitzGerald M.G."/>
            <person name="French C."/>
            <person name="Gujja S."/>
            <person name="Hansen K."/>
            <person name="Keifenheim D."/>
            <person name="Levin J.Z."/>
            <person name="Mosher R.A."/>
            <person name="Mueller C.A."/>
            <person name="Pfiffner J."/>
            <person name="Priest M."/>
            <person name="Russ C."/>
            <person name="Smialowska A."/>
            <person name="Swoboda P."/>
            <person name="Sykes S.M."/>
            <person name="Vaughn M."/>
            <person name="Vengrova S."/>
            <person name="Yoder R."/>
            <person name="Zeng Q."/>
            <person name="Allshire R."/>
            <person name="Baulcombe D."/>
            <person name="Birren B.W."/>
            <person name="Brown W."/>
            <person name="Ekwall K."/>
            <person name="Kellis M."/>
            <person name="Leatherwood J."/>
            <person name="Levin H."/>
            <person name="Margalit H."/>
            <person name="Martienssen R."/>
            <person name="Nieduszynski C.A."/>
            <person name="Spatafora J.W."/>
            <person name="Friedman N."/>
            <person name="Dalgaard J.Z."/>
            <person name="Baumann P."/>
            <person name="Niki H."/>
            <person name="Regev A."/>
            <person name="Nusbaum C."/>
        </authorList>
    </citation>
    <scope>IDENTIFICATION</scope>
</reference>
<reference key="3">
    <citation type="journal article" date="2011" name="Genetics">
        <title>Augmented annotation of the Schizosaccharomyces pombe genome reveals additional genes required for growth and viability.</title>
        <authorList>
            <person name="Bitton D.A."/>
            <person name="Wood V."/>
            <person name="Scutt P.J."/>
            <person name="Grallert A."/>
            <person name="Yates T."/>
            <person name="Smith D.L."/>
            <person name="Hagan I.M."/>
            <person name="Miller C.J."/>
        </authorList>
    </citation>
    <scope>IDENTIFICATION</scope>
    <scope>INDUCTION</scope>
</reference>
<dbReference type="EMBL" id="CU329670">
    <property type="protein sequence ID" value="CCD31310.1"/>
    <property type="molecule type" value="Genomic_DNA"/>
</dbReference>
<dbReference type="RefSeq" id="XP_004001764.1">
    <property type="nucleotide sequence ID" value="XM_004001715.1"/>
</dbReference>
<dbReference type="PDB" id="8FW5">
    <property type="method" value="EM"/>
    <property type="resolution" value="3.08 A"/>
    <property type="chains" value="H=1-117"/>
</dbReference>
<dbReference type="PDBsum" id="8FW5"/>
<dbReference type="SMR" id="G2TRJ4"/>
<dbReference type="BioGRID" id="4254454">
    <property type="interactions" value="3"/>
</dbReference>
<dbReference type="STRING" id="284812.G2TRJ4"/>
<dbReference type="PaxDb" id="4896-SPAC222.19.1"/>
<dbReference type="EnsemblFungi" id="SPAC222.19.1">
    <property type="protein sequence ID" value="SPAC222.19.1:pep"/>
    <property type="gene ID" value="SPAC222.19"/>
</dbReference>
<dbReference type="PomBase" id="SPAC222.19">
    <property type="gene designation" value="tam1"/>
</dbReference>
<dbReference type="VEuPathDB" id="FungiDB:SPAC222.19"/>
<dbReference type="HOGENOM" id="CLU_2086170_0_0_1"/>
<dbReference type="InParanoid" id="G2TRJ4"/>
<dbReference type="OMA" id="DACLHAQ"/>
<dbReference type="PRO" id="PR:G2TRJ4"/>
<dbReference type="Proteomes" id="UP000002485">
    <property type="component" value="Chromosome I"/>
</dbReference>
<dbReference type="GO" id="GO:0000329">
    <property type="term" value="C:fungal-type vacuole membrane"/>
    <property type="evidence" value="ECO:0000314"/>
    <property type="project" value="PomBase"/>
</dbReference>
<dbReference type="GO" id="GO:0071986">
    <property type="term" value="C:Ragulator complex"/>
    <property type="evidence" value="ECO:0000315"/>
    <property type="project" value="PomBase"/>
</dbReference>
<dbReference type="GO" id="GO:1903432">
    <property type="term" value="P:regulation of TORC1 signaling"/>
    <property type="evidence" value="ECO:0000315"/>
    <property type="project" value="PomBase"/>
</dbReference>
<sequence length="117" mass="12693">MSVSQQLSELASKEKTVLYVADQNLEEVLCFPESTDRTTLVQLTDACLHANELAKHLEFGKPLSITNQYSRGSCVLQIAKEKKDGSGMVVSTTIAAHNALRGALKCSNALDQVISQL</sequence>
<name>TAM1_SCHPO</name>
<keyword id="KW-0002">3D-structure</keyword>
<keyword id="KW-1185">Reference proteome</keyword>
<gene>
    <name type="primary">tam1</name>
    <name type="ORF">SPAC222.19</name>
</gene>
<protein>
    <recommendedName>
        <fullName>Uncharacterized protein tam1</fullName>
    </recommendedName>
    <alternativeName>
        <fullName>Transcripts altered in meiosis protein 1</fullName>
    </alternativeName>
</protein>